<evidence type="ECO:0000250" key="1">
    <source>
        <dbReference type="UniProtKB" id="P43686"/>
    </source>
</evidence>
<evidence type="ECO:0000255" key="2"/>
<evidence type="ECO:0000269" key="3">
    <source>
    </source>
</evidence>
<evidence type="ECO:0000305" key="4"/>
<evidence type="ECO:0007829" key="5">
    <source>
        <dbReference type="PDB" id="3AJI"/>
    </source>
</evidence>
<proteinExistence type="evidence at protein level"/>
<comment type="function">
    <text evidence="1">Component of the 26S proteasome, a multiprotein complex involved in the ATP-dependent degradation of ubiquitinated proteins. This complex plays a key role in the maintenance of protein homeostasis by removing misfolded or damaged proteins, which could impair cellular functions, and by removing proteins whose functions are no longer required. Therefore, the proteasome participates in numerous cellular processes, including cell cycle progression, apoptosis, or DNA damage repair. PSMC4 belongs to the heterohexameric ring of AAA (ATPases associated with diverse cellular activities) proteins that unfolds ubiquitinated target proteins that are concurrently translocated into a proteolytic chamber and degraded into peptides.</text>
</comment>
<comment type="subunit">
    <text evidence="1">Component of the 19S proteasome regulatory particle complex. The 26S proteasome consists of a 20S core particle (CP) and two 19S regulatory subunits (RP). The regulatory particle is made of a lid composed of 9 subunits, a base containing 6 ATPases including PSMC4 and few additional components. Interacts with NR1I3. Interacts with PAAF1. Interacts with TRIM5. Interacts with ZFAND1 (By similarity).</text>
</comment>
<comment type="subcellular location">
    <subcellularLocation>
        <location evidence="1">Cytoplasm</location>
    </subcellularLocation>
    <subcellularLocation>
        <location evidence="1">Nucleus</location>
    </subcellularLocation>
</comment>
<comment type="similarity">
    <text evidence="4">Belongs to the AAA ATPase family.</text>
</comment>
<accession>P54775</accession>
<accession>Q6ZWN9</accession>
<gene>
    <name type="primary">Psmc4</name>
    <name type="synonym">Tbp7</name>
</gene>
<keyword id="KW-0002">3D-structure</keyword>
<keyword id="KW-0007">Acetylation</keyword>
<keyword id="KW-0067">ATP-binding</keyword>
<keyword id="KW-0963">Cytoplasm</keyword>
<keyword id="KW-0903">Direct protein sequencing</keyword>
<keyword id="KW-0547">Nucleotide-binding</keyword>
<keyword id="KW-0539">Nucleus</keyword>
<keyword id="KW-0597">Phosphoprotein</keyword>
<keyword id="KW-0647">Proteasome</keyword>
<keyword id="KW-1185">Reference proteome</keyword>
<dbReference type="EMBL" id="L76223">
    <property type="protein sequence ID" value="AAA88243.1"/>
    <property type="molecule type" value="mRNA"/>
</dbReference>
<dbReference type="EMBL" id="AB040869">
    <property type="protein sequence ID" value="BAB16348.1"/>
    <property type="molecule type" value="Genomic_DNA"/>
</dbReference>
<dbReference type="EMBL" id="AK077507">
    <property type="protein sequence ID" value="BAC36835.1"/>
    <property type="molecule type" value="mRNA"/>
</dbReference>
<dbReference type="EMBL" id="AK153991">
    <property type="protein sequence ID" value="BAE32301.1"/>
    <property type="molecule type" value="mRNA"/>
</dbReference>
<dbReference type="EMBL" id="AK160718">
    <property type="protein sequence ID" value="BAE35967.1"/>
    <property type="molecule type" value="mRNA"/>
</dbReference>
<dbReference type="EMBL" id="AK167041">
    <property type="protein sequence ID" value="BAE39209.1"/>
    <property type="molecule type" value="mRNA"/>
</dbReference>
<dbReference type="EMBL" id="CH466593">
    <property type="protein sequence ID" value="EDL24160.1"/>
    <property type="molecule type" value="Genomic_DNA"/>
</dbReference>
<dbReference type="EMBL" id="BC012708">
    <property type="protein sequence ID" value="AAH12708.1"/>
    <property type="molecule type" value="mRNA"/>
</dbReference>
<dbReference type="CCDS" id="CCDS21034.1"/>
<dbReference type="RefSeq" id="NP_036004.2">
    <property type="nucleotide sequence ID" value="NM_011874.2"/>
</dbReference>
<dbReference type="PDB" id="3AJI">
    <property type="method" value="X-ray"/>
    <property type="resolution" value="2.05 A"/>
    <property type="chains" value="B/D=337-418"/>
</dbReference>
<dbReference type="PDBsum" id="3AJI"/>
<dbReference type="SMR" id="P54775"/>
<dbReference type="BioGRID" id="204845">
    <property type="interactions" value="64"/>
</dbReference>
<dbReference type="FunCoup" id="P54775">
    <property type="interactions" value="3253"/>
</dbReference>
<dbReference type="IntAct" id="P54775">
    <property type="interactions" value="6"/>
</dbReference>
<dbReference type="MINT" id="P54775"/>
<dbReference type="STRING" id="10090.ENSMUSP00000032824"/>
<dbReference type="GlyGen" id="P54775">
    <property type="glycosylation" value="1 site, 1 O-linked glycan (1 site)"/>
</dbReference>
<dbReference type="iPTMnet" id="P54775"/>
<dbReference type="PhosphoSitePlus" id="P54775"/>
<dbReference type="SwissPalm" id="P54775"/>
<dbReference type="REPRODUCTION-2DPAGE" id="P54775"/>
<dbReference type="jPOST" id="P54775"/>
<dbReference type="PaxDb" id="10090-ENSMUSP00000032824"/>
<dbReference type="PeptideAtlas" id="P54775"/>
<dbReference type="ProteomicsDB" id="291571"/>
<dbReference type="Pumba" id="P54775"/>
<dbReference type="Antibodypedia" id="1215">
    <property type="antibodies" value="240 antibodies from 33 providers"/>
</dbReference>
<dbReference type="DNASU" id="23996"/>
<dbReference type="Ensembl" id="ENSMUST00000032824.10">
    <property type="protein sequence ID" value="ENSMUSP00000032824.10"/>
    <property type="gene ID" value="ENSMUSG00000030603.17"/>
</dbReference>
<dbReference type="GeneID" id="23996"/>
<dbReference type="KEGG" id="mmu:23996"/>
<dbReference type="UCSC" id="uc009fxp.1">
    <property type="organism name" value="mouse"/>
</dbReference>
<dbReference type="AGR" id="MGI:1346093"/>
<dbReference type="CTD" id="5704"/>
<dbReference type="MGI" id="MGI:1346093">
    <property type="gene designation" value="Psmc4"/>
</dbReference>
<dbReference type="VEuPathDB" id="HostDB:ENSMUSG00000030603"/>
<dbReference type="eggNOG" id="KOG0727">
    <property type="taxonomic scope" value="Eukaryota"/>
</dbReference>
<dbReference type="GeneTree" id="ENSGT01020000230346"/>
<dbReference type="HOGENOM" id="CLU_000688_2_0_1"/>
<dbReference type="InParanoid" id="P54775"/>
<dbReference type="OMA" id="QDIGGMD"/>
<dbReference type="OrthoDB" id="10255768at2759"/>
<dbReference type="PhylomeDB" id="P54775"/>
<dbReference type="TreeFam" id="TF106227"/>
<dbReference type="BRENDA" id="5.6.1.5">
    <property type="organism ID" value="3474"/>
</dbReference>
<dbReference type="Reactome" id="R-MMU-1169091">
    <property type="pathway name" value="Activation of NF-kappaB in B cells"/>
</dbReference>
<dbReference type="Reactome" id="R-MMU-1234176">
    <property type="pathway name" value="Oxygen-dependent proline hydroxylation of Hypoxia-inducible Factor Alpha"/>
</dbReference>
<dbReference type="Reactome" id="R-MMU-1236978">
    <property type="pathway name" value="Cross-presentation of soluble exogenous antigens (endosomes)"/>
</dbReference>
<dbReference type="Reactome" id="R-MMU-174084">
    <property type="pathway name" value="Autodegradation of Cdh1 by Cdh1:APC/C"/>
</dbReference>
<dbReference type="Reactome" id="R-MMU-174154">
    <property type="pathway name" value="APC/C:Cdc20 mediated degradation of Securin"/>
</dbReference>
<dbReference type="Reactome" id="R-MMU-174178">
    <property type="pathway name" value="APC/C:Cdh1 mediated degradation of Cdc20 and other APC/C:Cdh1 targeted proteins in late mitosis/early G1"/>
</dbReference>
<dbReference type="Reactome" id="R-MMU-174184">
    <property type="pathway name" value="Cdc20:Phospho-APC/C mediated degradation of Cyclin A"/>
</dbReference>
<dbReference type="Reactome" id="R-MMU-187577">
    <property type="pathway name" value="SCF(Skp2)-mediated degradation of p27/p21"/>
</dbReference>
<dbReference type="Reactome" id="R-MMU-195253">
    <property type="pathway name" value="Degradation of beta-catenin by the destruction complex"/>
</dbReference>
<dbReference type="Reactome" id="R-MMU-202424">
    <property type="pathway name" value="Downstream TCR signaling"/>
</dbReference>
<dbReference type="Reactome" id="R-MMU-2467813">
    <property type="pathway name" value="Separation of Sister Chromatids"/>
</dbReference>
<dbReference type="Reactome" id="R-MMU-2871837">
    <property type="pathway name" value="FCERI mediated NF-kB activation"/>
</dbReference>
<dbReference type="Reactome" id="R-MMU-349425">
    <property type="pathway name" value="Autodegradation of the E3 ubiquitin ligase COP1"/>
</dbReference>
<dbReference type="Reactome" id="R-MMU-350562">
    <property type="pathway name" value="Regulation of ornithine decarboxylase (ODC)"/>
</dbReference>
<dbReference type="Reactome" id="R-MMU-382556">
    <property type="pathway name" value="ABC-family proteins mediated transport"/>
</dbReference>
<dbReference type="Reactome" id="R-MMU-450408">
    <property type="pathway name" value="AUF1 (hnRNP D0) binds and destabilizes mRNA"/>
</dbReference>
<dbReference type="Reactome" id="R-MMU-4608870">
    <property type="pathway name" value="Asymmetric localization of PCP proteins"/>
</dbReference>
<dbReference type="Reactome" id="R-MMU-4641257">
    <property type="pathway name" value="Degradation of AXIN"/>
</dbReference>
<dbReference type="Reactome" id="R-MMU-4641258">
    <property type="pathway name" value="Degradation of DVL"/>
</dbReference>
<dbReference type="Reactome" id="R-MMU-5358346">
    <property type="pathway name" value="Hedgehog ligand biogenesis"/>
</dbReference>
<dbReference type="Reactome" id="R-MMU-5607761">
    <property type="pathway name" value="Dectin-1 mediated noncanonical NF-kB signaling"/>
</dbReference>
<dbReference type="Reactome" id="R-MMU-5607764">
    <property type="pathway name" value="CLEC7A (Dectin-1) signaling"/>
</dbReference>
<dbReference type="Reactome" id="R-MMU-5610780">
    <property type="pathway name" value="Degradation of GLI1 by the proteasome"/>
</dbReference>
<dbReference type="Reactome" id="R-MMU-5610785">
    <property type="pathway name" value="GLI3 is processed to GLI3R by the proteasome"/>
</dbReference>
<dbReference type="Reactome" id="R-MMU-5632684">
    <property type="pathway name" value="Hedgehog 'on' state"/>
</dbReference>
<dbReference type="Reactome" id="R-MMU-5658442">
    <property type="pathway name" value="Regulation of RAS by GAPs"/>
</dbReference>
<dbReference type="Reactome" id="R-MMU-5668541">
    <property type="pathway name" value="TNFR2 non-canonical NF-kB pathway"/>
</dbReference>
<dbReference type="Reactome" id="R-MMU-5676590">
    <property type="pathway name" value="NIK--&gt;noncanonical NF-kB signaling"/>
</dbReference>
<dbReference type="Reactome" id="R-MMU-5687128">
    <property type="pathway name" value="MAPK6/MAPK4 signaling"/>
</dbReference>
<dbReference type="Reactome" id="R-MMU-5689603">
    <property type="pathway name" value="UCH proteinases"/>
</dbReference>
<dbReference type="Reactome" id="R-MMU-5689880">
    <property type="pathway name" value="Ub-specific processing proteases"/>
</dbReference>
<dbReference type="Reactome" id="R-MMU-68867">
    <property type="pathway name" value="Assembly of the pre-replicative complex"/>
</dbReference>
<dbReference type="Reactome" id="R-MMU-68949">
    <property type="pathway name" value="Orc1 removal from chromatin"/>
</dbReference>
<dbReference type="Reactome" id="R-MMU-69017">
    <property type="pathway name" value="CDK-mediated phosphorylation and removal of Cdc6"/>
</dbReference>
<dbReference type="Reactome" id="R-MMU-69481">
    <property type="pathway name" value="G2/M Checkpoints"/>
</dbReference>
<dbReference type="Reactome" id="R-MMU-69601">
    <property type="pathway name" value="Ubiquitin Mediated Degradation of Phosphorylated Cdc25A"/>
</dbReference>
<dbReference type="Reactome" id="R-MMU-75815">
    <property type="pathway name" value="Ubiquitin-dependent degradation of Cyclin D"/>
</dbReference>
<dbReference type="Reactome" id="R-MMU-8852276">
    <property type="pathway name" value="The role of GTSE1 in G2/M progression after G2 checkpoint"/>
</dbReference>
<dbReference type="Reactome" id="R-MMU-8854050">
    <property type="pathway name" value="FBXL7 down-regulates AURKA during mitotic entry and in early mitosis"/>
</dbReference>
<dbReference type="Reactome" id="R-MMU-8939236">
    <property type="pathway name" value="RUNX1 regulates transcription of genes involved in differentiation of HSCs"/>
</dbReference>
<dbReference type="Reactome" id="R-MMU-8939902">
    <property type="pathway name" value="Regulation of RUNX2 expression and activity"/>
</dbReference>
<dbReference type="Reactome" id="R-MMU-8941858">
    <property type="pathway name" value="Regulation of RUNX3 expression and activity"/>
</dbReference>
<dbReference type="Reactome" id="R-MMU-8948751">
    <property type="pathway name" value="Regulation of PTEN stability and activity"/>
</dbReference>
<dbReference type="Reactome" id="R-MMU-8951664">
    <property type="pathway name" value="Neddylation"/>
</dbReference>
<dbReference type="Reactome" id="R-MMU-9020702">
    <property type="pathway name" value="Interleukin-1 signaling"/>
</dbReference>
<dbReference type="Reactome" id="R-MMU-9755511">
    <property type="pathway name" value="KEAP1-NFE2L2 pathway"/>
</dbReference>
<dbReference type="Reactome" id="R-MMU-9762114">
    <property type="pathway name" value="GSK3B and BTRC:CUL1-mediated-degradation of NFE2L2"/>
</dbReference>
<dbReference type="Reactome" id="R-MMU-983168">
    <property type="pathway name" value="Antigen processing: Ubiquitination &amp; Proteasome degradation"/>
</dbReference>
<dbReference type="Reactome" id="R-MMU-9907900">
    <property type="pathway name" value="Proteasome assembly"/>
</dbReference>
<dbReference type="BioGRID-ORCS" id="23996">
    <property type="hits" value="28 hits in 80 CRISPR screens"/>
</dbReference>
<dbReference type="ChiTaRS" id="Psmc4">
    <property type="organism name" value="mouse"/>
</dbReference>
<dbReference type="EvolutionaryTrace" id="P54775"/>
<dbReference type="PRO" id="PR:P54775"/>
<dbReference type="Proteomes" id="UP000000589">
    <property type="component" value="Chromosome 7"/>
</dbReference>
<dbReference type="RNAct" id="P54775">
    <property type="molecule type" value="protein"/>
</dbReference>
<dbReference type="Bgee" id="ENSMUSG00000030603">
    <property type="expression patterns" value="Expressed in optic fissure and 255 other cell types or tissues"/>
</dbReference>
<dbReference type="ExpressionAtlas" id="P54775">
    <property type="expression patterns" value="baseline and differential"/>
</dbReference>
<dbReference type="GO" id="GO:0036064">
    <property type="term" value="C:ciliary basal body"/>
    <property type="evidence" value="ECO:0007669"/>
    <property type="project" value="Ensembl"/>
</dbReference>
<dbReference type="GO" id="GO:0031597">
    <property type="term" value="C:cytosolic proteasome complex"/>
    <property type="evidence" value="ECO:0007669"/>
    <property type="project" value="Ensembl"/>
</dbReference>
<dbReference type="GO" id="GO:0016234">
    <property type="term" value="C:inclusion body"/>
    <property type="evidence" value="ECO:0007669"/>
    <property type="project" value="Ensembl"/>
</dbReference>
<dbReference type="GO" id="GO:0005654">
    <property type="term" value="C:nucleoplasm"/>
    <property type="evidence" value="ECO:0007669"/>
    <property type="project" value="Ensembl"/>
</dbReference>
<dbReference type="GO" id="GO:0022624">
    <property type="term" value="C:proteasome accessory complex"/>
    <property type="evidence" value="ECO:0000314"/>
    <property type="project" value="UniProtKB"/>
</dbReference>
<dbReference type="GO" id="GO:0005524">
    <property type="term" value="F:ATP binding"/>
    <property type="evidence" value="ECO:0007669"/>
    <property type="project" value="UniProtKB-KW"/>
</dbReference>
<dbReference type="GO" id="GO:0016887">
    <property type="term" value="F:ATP hydrolysis activity"/>
    <property type="evidence" value="ECO:0007669"/>
    <property type="project" value="InterPro"/>
</dbReference>
<dbReference type="GO" id="GO:0001824">
    <property type="term" value="P:blastocyst development"/>
    <property type="evidence" value="ECO:0000315"/>
    <property type="project" value="MGI"/>
</dbReference>
<dbReference type="CDD" id="cd19502">
    <property type="entry name" value="RecA-like_PAN_like"/>
    <property type="match status" value="1"/>
</dbReference>
<dbReference type="FunFam" id="1.10.8.60:FF:000018">
    <property type="entry name" value="26S protease regulatory subunit 6B"/>
    <property type="match status" value="1"/>
</dbReference>
<dbReference type="FunFam" id="2.40.50.140:FF:000046">
    <property type="entry name" value="26S protease regulatory subunit 6B"/>
    <property type="match status" value="1"/>
</dbReference>
<dbReference type="FunFam" id="3.40.50.300:FF:000033">
    <property type="entry name" value="26S protease regulatory subunit 6B"/>
    <property type="match status" value="1"/>
</dbReference>
<dbReference type="Gene3D" id="1.10.8.60">
    <property type="match status" value="1"/>
</dbReference>
<dbReference type="Gene3D" id="2.40.50.140">
    <property type="entry name" value="Nucleic acid-binding proteins"/>
    <property type="match status" value="1"/>
</dbReference>
<dbReference type="Gene3D" id="3.40.50.300">
    <property type="entry name" value="P-loop containing nucleotide triphosphate hydrolases"/>
    <property type="match status" value="1"/>
</dbReference>
<dbReference type="InterPro" id="IPR050221">
    <property type="entry name" value="26S_Proteasome_ATPase"/>
</dbReference>
<dbReference type="InterPro" id="IPR003593">
    <property type="entry name" value="AAA+_ATPase"/>
</dbReference>
<dbReference type="InterPro" id="IPR041569">
    <property type="entry name" value="AAA_lid_3"/>
</dbReference>
<dbReference type="InterPro" id="IPR003959">
    <property type="entry name" value="ATPase_AAA_core"/>
</dbReference>
<dbReference type="InterPro" id="IPR003960">
    <property type="entry name" value="ATPase_AAA_CS"/>
</dbReference>
<dbReference type="InterPro" id="IPR012340">
    <property type="entry name" value="NA-bd_OB-fold"/>
</dbReference>
<dbReference type="InterPro" id="IPR027417">
    <property type="entry name" value="P-loop_NTPase"/>
</dbReference>
<dbReference type="InterPro" id="IPR032501">
    <property type="entry name" value="Prot_ATP_ID_OB_2nd"/>
</dbReference>
<dbReference type="PANTHER" id="PTHR23073">
    <property type="entry name" value="26S PROTEASOME REGULATORY SUBUNIT"/>
    <property type="match status" value="1"/>
</dbReference>
<dbReference type="Pfam" id="PF00004">
    <property type="entry name" value="AAA"/>
    <property type="match status" value="1"/>
</dbReference>
<dbReference type="Pfam" id="PF17862">
    <property type="entry name" value="AAA_lid_3"/>
    <property type="match status" value="1"/>
</dbReference>
<dbReference type="Pfam" id="PF16450">
    <property type="entry name" value="Prot_ATP_ID_OB_C"/>
    <property type="match status" value="1"/>
</dbReference>
<dbReference type="SMART" id="SM00382">
    <property type="entry name" value="AAA"/>
    <property type="match status" value="1"/>
</dbReference>
<dbReference type="SUPFAM" id="SSF52540">
    <property type="entry name" value="P-loop containing nucleoside triphosphate hydrolases"/>
    <property type="match status" value="1"/>
</dbReference>
<dbReference type="PROSITE" id="PS00674">
    <property type="entry name" value="AAA"/>
    <property type="match status" value="1"/>
</dbReference>
<protein>
    <recommendedName>
        <fullName>26S proteasome regulatory subunit 6B</fullName>
    </recommendedName>
    <alternativeName>
        <fullName>26S proteasome AAA-ATPase subunit RPT3</fullName>
    </alternativeName>
    <alternativeName>
        <fullName>CIP21</fullName>
    </alternativeName>
    <alternativeName>
        <fullName>MB67-interacting protein</fullName>
    </alternativeName>
    <alternativeName>
        <fullName>MIP224</fullName>
    </alternativeName>
    <alternativeName>
        <fullName>Proteasome 26S subunit ATPase 4</fullName>
    </alternativeName>
    <alternativeName>
        <fullName>Tat-binding protein 7</fullName>
        <shortName>TBP-7</shortName>
    </alternativeName>
</protein>
<sequence>MEEIGILVEKIQDEIPALSVSRPQTGLSFLGPEPEDLEDLYSRYKKLQQELEFLEVQEEYIKDEQKNLKKEFLHAQEEVKRIQSIPLVIGQFLEAVDQNTAIVGSTTGSNYYVRILSTIDRELLKPNASVALHKHSNALVDVLPPEADSSIMMLTSDQKPDVMYADIGGMDIQKQEVREAVELPLTHFELYKQIGIDPPRGVLMYGPPGCGKTMLAKAVAHHTTAAFIRVVGSEFVQKYLGEGPRMVRDVFRLAKENAPAIIFIDEIDAIATKRFDAQTGADREVQRILLELLNQMDGFDQNVNVKVIMATNRADTLDPALLRPGRLDRKIEFPLPDRRQKRLIFSTITSKMNLSEEVDLEDYVARPDKISGADINSICQESGMLAVRENRYIVLAKDFEKAYKTVIKKDEQEHEFYK</sequence>
<reference key="1">
    <citation type="journal article" date="1996" name="J. Steroid Biochem. Mol. Biol.">
        <title>A component of the 26S proteasome binds on orphan member of the nuclear hormone receptor superfamily.</title>
        <authorList>
            <person name="Choi H.S."/>
            <person name="Seol W."/>
            <person name="Moore D.D."/>
        </authorList>
    </citation>
    <scope>NUCLEOTIDE SEQUENCE [MRNA]</scope>
    <scope>INTERACTION WITH NR1I3</scope>
    <source>
        <tissue>Liver</tissue>
    </source>
</reference>
<reference key="2">
    <citation type="journal article" date="2000" name="Genomics">
        <title>Mouse proteasomal ATPases Psmc3 and Psmc4: genomic organization and gene targeting.</title>
        <authorList>
            <person name="Sakao Y."/>
            <person name="Kawai T."/>
            <person name="Takeuchi O."/>
            <person name="Copeland N.G."/>
            <person name="Gilbert D.J."/>
            <person name="Jenkins N.A."/>
            <person name="Takeda K."/>
            <person name="Akira S."/>
        </authorList>
    </citation>
    <scope>NUCLEOTIDE SEQUENCE [GENOMIC DNA]</scope>
</reference>
<reference key="3">
    <citation type="journal article" date="2005" name="Science">
        <title>The transcriptional landscape of the mammalian genome.</title>
        <authorList>
            <person name="Carninci P."/>
            <person name="Kasukawa T."/>
            <person name="Katayama S."/>
            <person name="Gough J."/>
            <person name="Frith M.C."/>
            <person name="Maeda N."/>
            <person name="Oyama R."/>
            <person name="Ravasi T."/>
            <person name="Lenhard B."/>
            <person name="Wells C."/>
            <person name="Kodzius R."/>
            <person name="Shimokawa K."/>
            <person name="Bajic V.B."/>
            <person name="Brenner S.E."/>
            <person name="Batalov S."/>
            <person name="Forrest A.R."/>
            <person name="Zavolan M."/>
            <person name="Davis M.J."/>
            <person name="Wilming L.G."/>
            <person name="Aidinis V."/>
            <person name="Allen J.E."/>
            <person name="Ambesi-Impiombato A."/>
            <person name="Apweiler R."/>
            <person name="Aturaliya R.N."/>
            <person name="Bailey T.L."/>
            <person name="Bansal M."/>
            <person name="Baxter L."/>
            <person name="Beisel K.W."/>
            <person name="Bersano T."/>
            <person name="Bono H."/>
            <person name="Chalk A.M."/>
            <person name="Chiu K.P."/>
            <person name="Choudhary V."/>
            <person name="Christoffels A."/>
            <person name="Clutterbuck D.R."/>
            <person name="Crowe M.L."/>
            <person name="Dalla E."/>
            <person name="Dalrymple B.P."/>
            <person name="de Bono B."/>
            <person name="Della Gatta G."/>
            <person name="di Bernardo D."/>
            <person name="Down T."/>
            <person name="Engstrom P."/>
            <person name="Fagiolini M."/>
            <person name="Faulkner G."/>
            <person name="Fletcher C.F."/>
            <person name="Fukushima T."/>
            <person name="Furuno M."/>
            <person name="Futaki S."/>
            <person name="Gariboldi M."/>
            <person name="Georgii-Hemming P."/>
            <person name="Gingeras T.R."/>
            <person name="Gojobori T."/>
            <person name="Green R.E."/>
            <person name="Gustincich S."/>
            <person name="Harbers M."/>
            <person name="Hayashi Y."/>
            <person name="Hensch T.K."/>
            <person name="Hirokawa N."/>
            <person name="Hill D."/>
            <person name="Huminiecki L."/>
            <person name="Iacono M."/>
            <person name="Ikeo K."/>
            <person name="Iwama A."/>
            <person name="Ishikawa T."/>
            <person name="Jakt M."/>
            <person name="Kanapin A."/>
            <person name="Katoh M."/>
            <person name="Kawasawa Y."/>
            <person name="Kelso J."/>
            <person name="Kitamura H."/>
            <person name="Kitano H."/>
            <person name="Kollias G."/>
            <person name="Krishnan S.P."/>
            <person name="Kruger A."/>
            <person name="Kummerfeld S.K."/>
            <person name="Kurochkin I.V."/>
            <person name="Lareau L.F."/>
            <person name="Lazarevic D."/>
            <person name="Lipovich L."/>
            <person name="Liu J."/>
            <person name="Liuni S."/>
            <person name="McWilliam S."/>
            <person name="Madan Babu M."/>
            <person name="Madera M."/>
            <person name="Marchionni L."/>
            <person name="Matsuda H."/>
            <person name="Matsuzawa S."/>
            <person name="Miki H."/>
            <person name="Mignone F."/>
            <person name="Miyake S."/>
            <person name="Morris K."/>
            <person name="Mottagui-Tabar S."/>
            <person name="Mulder N."/>
            <person name="Nakano N."/>
            <person name="Nakauchi H."/>
            <person name="Ng P."/>
            <person name="Nilsson R."/>
            <person name="Nishiguchi S."/>
            <person name="Nishikawa S."/>
            <person name="Nori F."/>
            <person name="Ohara O."/>
            <person name="Okazaki Y."/>
            <person name="Orlando V."/>
            <person name="Pang K.C."/>
            <person name="Pavan W.J."/>
            <person name="Pavesi G."/>
            <person name="Pesole G."/>
            <person name="Petrovsky N."/>
            <person name="Piazza S."/>
            <person name="Reed J."/>
            <person name="Reid J.F."/>
            <person name="Ring B.Z."/>
            <person name="Ringwald M."/>
            <person name="Rost B."/>
            <person name="Ruan Y."/>
            <person name="Salzberg S.L."/>
            <person name="Sandelin A."/>
            <person name="Schneider C."/>
            <person name="Schoenbach C."/>
            <person name="Sekiguchi K."/>
            <person name="Semple C.A."/>
            <person name="Seno S."/>
            <person name="Sessa L."/>
            <person name="Sheng Y."/>
            <person name="Shibata Y."/>
            <person name="Shimada H."/>
            <person name="Shimada K."/>
            <person name="Silva D."/>
            <person name="Sinclair B."/>
            <person name="Sperling S."/>
            <person name="Stupka E."/>
            <person name="Sugiura K."/>
            <person name="Sultana R."/>
            <person name="Takenaka Y."/>
            <person name="Taki K."/>
            <person name="Tammoja K."/>
            <person name="Tan S.L."/>
            <person name="Tang S."/>
            <person name="Taylor M.S."/>
            <person name="Tegner J."/>
            <person name="Teichmann S.A."/>
            <person name="Ueda H.R."/>
            <person name="van Nimwegen E."/>
            <person name="Verardo R."/>
            <person name="Wei C.L."/>
            <person name="Yagi K."/>
            <person name="Yamanishi H."/>
            <person name="Zabarovsky E."/>
            <person name="Zhu S."/>
            <person name="Zimmer A."/>
            <person name="Hide W."/>
            <person name="Bult C."/>
            <person name="Grimmond S.M."/>
            <person name="Teasdale R.D."/>
            <person name="Liu E.T."/>
            <person name="Brusic V."/>
            <person name="Quackenbush J."/>
            <person name="Wahlestedt C."/>
            <person name="Mattick J.S."/>
            <person name="Hume D.A."/>
            <person name="Kai C."/>
            <person name="Sasaki D."/>
            <person name="Tomaru Y."/>
            <person name="Fukuda S."/>
            <person name="Kanamori-Katayama M."/>
            <person name="Suzuki M."/>
            <person name="Aoki J."/>
            <person name="Arakawa T."/>
            <person name="Iida J."/>
            <person name="Imamura K."/>
            <person name="Itoh M."/>
            <person name="Kato T."/>
            <person name="Kawaji H."/>
            <person name="Kawagashira N."/>
            <person name="Kawashima T."/>
            <person name="Kojima M."/>
            <person name="Kondo S."/>
            <person name="Konno H."/>
            <person name="Nakano K."/>
            <person name="Ninomiya N."/>
            <person name="Nishio T."/>
            <person name="Okada M."/>
            <person name="Plessy C."/>
            <person name="Shibata K."/>
            <person name="Shiraki T."/>
            <person name="Suzuki S."/>
            <person name="Tagami M."/>
            <person name="Waki K."/>
            <person name="Watahiki A."/>
            <person name="Okamura-Oho Y."/>
            <person name="Suzuki H."/>
            <person name="Kawai J."/>
            <person name="Hayashizaki Y."/>
        </authorList>
    </citation>
    <scope>NUCLEOTIDE SEQUENCE [LARGE SCALE MRNA]</scope>
    <source>
        <strain>C57BL/6J</strain>
        <strain>NOD</strain>
        <tissue>Head</tissue>
        <tissue>Thymus</tissue>
    </source>
</reference>
<reference key="4">
    <citation type="submission" date="2005-09" db="EMBL/GenBank/DDBJ databases">
        <authorList>
            <person name="Mural R.J."/>
            <person name="Adams M.D."/>
            <person name="Myers E.W."/>
            <person name="Smith H.O."/>
            <person name="Venter J.C."/>
        </authorList>
    </citation>
    <scope>NUCLEOTIDE SEQUENCE [LARGE SCALE GENOMIC DNA]</scope>
</reference>
<reference key="5">
    <citation type="journal article" date="2004" name="Genome Res.">
        <title>The status, quality, and expansion of the NIH full-length cDNA project: the Mammalian Gene Collection (MGC).</title>
        <authorList>
            <consortium name="The MGC Project Team"/>
        </authorList>
    </citation>
    <scope>NUCLEOTIDE SEQUENCE [LARGE SCALE MRNA]</scope>
    <source>
        <strain>FVB/N</strain>
        <tissue>Liver</tissue>
    </source>
</reference>
<reference key="6">
    <citation type="submission" date="2007-04" db="UniProtKB">
        <authorList>
            <person name="Lubec G."/>
            <person name="Kang S.U."/>
        </authorList>
    </citation>
    <scope>PROTEIN SEQUENCE OF 201-212</scope>
    <scope>IDENTIFICATION BY MASS SPECTROMETRY</scope>
    <source>
        <strain>C57BL/6J</strain>
        <tissue>Brain</tissue>
    </source>
</reference>
<reference key="7">
    <citation type="journal article" date="2006" name="Circ. Res.">
        <title>Mapping the murine cardiac 26S proteasome complexes.</title>
        <authorList>
            <person name="Gomes A.V."/>
            <person name="Zong C."/>
            <person name="Edmondson R.D."/>
            <person name="Li X."/>
            <person name="Stefani E."/>
            <person name="Zhang J."/>
            <person name="Jones R.C."/>
            <person name="Thyparambil S."/>
            <person name="Wang G.W."/>
            <person name="Qiao X."/>
            <person name="Bardag-Gorce F."/>
            <person name="Ping P."/>
        </authorList>
    </citation>
    <scope>IDENTIFICATION IN THE 19S PROTEASOME REGULATORY COMPLEX</scope>
    <scope>ACETYLATION AT MET-1</scope>
</reference>
<reference key="8">
    <citation type="journal article" date="2010" name="Cell">
        <title>A tissue-specific atlas of mouse protein phosphorylation and expression.</title>
        <authorList>
            <person name="Huttlin E.L."/>
            <person name="Jedrychowski M.P."/>
            <person name="Elias J.E."/>
            <person name="Goswami T."/>
            <person name="Rad R."/>
            <person name="Beausoleil S.A."/>
            <person name="Villen J."/>
            <person name="Haas W."/>
            <person name="Sowa M.E."/>
            <person name="Gygi S.P."/>
        </authorList>
    </citation>
    <scope>IDENTIFICATION BY MASS SPECTROMETRY [LARGE SCALE ANALYSIS]</scope>
    <source>
        <tissue>Brain</tissue>
        <tissue>Brown adipose tissue</tissue>
        <tissue>Heart</tissue>
        <tissue>Kidney</tissue>
        <tissue>Liver</tissue>
        <tissue>Lung</tissue>
        <tissue>Pancreas</tissue>
        <tissue>Spleen</tissue>
        <tissue>Testis</tissue>
    </source>
</reference>
<organism>
    <name type="scientific">Mus musculus</name>
    <name type="common">Mouse</name>
    <dbReference type="NCBI Taxonomy" id="10090"/>
    <lineage>
        <taxon>Eukaryota</taxon>
        <taxon>Metazoa</taxon>
        <taxon>Chordata</taxon>
        <taxon>Craniata</taxon>
        <taxon>Vertebrata</taxon>
        <taxon>Euteleostomi</taxon>
        <taxon>Mammalia</taxon>
        <taxon>Eutheria</taxon>
        <taxon>Euarchontoglires</taxon>
        <taxon>Glires</taxon>
        <taxon>Rodentia</taxon>
        <taxon>Myomorpha</taxon>
        <taxon>Muroidea</taxon>
        <taxon>Muridae</taxon>
        <taxon>Murinae</taxon>
        <taxon>Mus</taxon>
        <taxon>Mus</taxon>
    </lineage>
</organism>
<feature type="chain" id="PRO_0000084687" description="26S proteasome regulatory subunit 6B">
    <location>
        <begin position="1"/>
        <end position="418"/>
    </location>
</feature>
<feature type="binding site" evidence="2">
    <location>
        <begin position="206"/>
        <end position="213"/>
    </location>
    <ligand>
        <name>ATP</name>
        <dbReference type="ChEBI" id="CHEBI:30616"/>
    </ligand>
</feature>
<feature type="modified residue" description="N-acetylmethionine" evidence="3">
    <location>
        <position position="1"/>
    </location>
</feature>
<feature type="modified residue" description="Phosphoserine" evidence="1">
    <location>
        <position position="21"/>
    </location>
</feature>
<feature type="modified residue" description="Phosphothreonine" evidence="1">
    <location>
        <position position="25"/>
    </location>
</feature>
<feature type="modified residue" description="Phosphoserine" evidence="1">
    <location>
        <position position="28"/>
    </location>
</feature>
<feature type="modified residue" description="N6-acetyllysine" evidence="1">
    <location>
        <position position="397"/>
    </location>
</feature>
<feature type="modified residue" description="N6-acetyllysine" evidence="1">
    <location>
        <position position="401"/>
    </location>
</feature>
<feature type="sequence conflict" description="In Ref. 1; AAA88243 and 2; BAB16348." evidence="4" ref="1 2">
    <original>G</original>
    <variation>A</variation>
    <location>
        <position position="104"/>
    </location>
</feature>
<feature type="sequence conflict" description="In Ref. 1; AAA88243 and 2; BAB16348." evidence="4" ref="1 2">
    <original>IL</original>
    <variation>MV</variation>
    <location>
        <begin position="115"/>
        <end position="116"/>
    </location>
</feature>
<feature type="sequence conflict" description="In Ref. 1; AAA88243 and 2; BAB16348." evidence="4" ref="1 2">
    <original>E</original>
    <variation>A</variation>
    <location>
        <position position="146"/>
    </location>
</feature>
<feature type="sequence conflict" description="In Ref. 1; AAA88243 and 2; BAB16348." evidence="4" ref="1 2">
    <original>ES</original>
    <variation>AR</variation>
    <location>
        <begin position="381"/>
        <end position="382"/>
    </location>
</feature>
<feature type="sequence conflict" description="In Ref. 1; AAA88243 and 2; BAB16348." evidence="4" ref="1 2">
    <original>NR</original>
    <variation>TA</variation>
    <location>
        <begin position="390"/>
        <end position="391"/>
    </location>
</feature>
<feature type="helix" evidence="5">
    <location>
        <begin position="338"/>
        <end position="349"/>
    </location>
</feature>
<feature type="helix" evidence="5">
    <location>
        <begin position="361"/>
        <end position="364"/>
    </location>
</feature>
<feature type="helix" evidence="5">
    <location>
        <begin position="372"/>
        <end position="384"/>
    </location>
</feature>
<feature type="helix" evidence="5">
    <location>
        <begin position="385"/>
        <end position="387"/>
    </location>
</feature>
<feature type="strand" evidence="5">
    <location>
        <begin position="392"/>
        <end position="394"/>
    </location>
</feature>
<feature type="helix" evidence="5">
    <location>
        <begin position="396"/>
        <end position="406"/>
    </location>
</feature>
<name>PRS6B_MOUSE</name>